<gene>
    <name evidence="1" type="primary">nfo</name>
    <name type="ordered locus">MLBr01889</name>
</gene>
<reference key="1">
    <citation type="journal article" date="2009" name="Nat. Genet.">
        <title>Comparative genomic and phylogeographic analysis of Mycobacterium leprae.</title>
        <authorList>
            <person name="Monot M."/>
            <person name="Honore N."/>
            <person name="Garnier T."/>
            <person name="Zidane N."/>
            <person name="Sherafi D."/>
            <person name="Paniz-Mondolfi A."/>
            <person name="Matsuoka M."/>
            <person name="Taylor G.M."/>
            <person name="Donoghue H.D."/>
            <person name="Bouwman A."/>
            <person name="Mays S."/>
            <person name="Watson C."/>
            <person name="Lockwood D."/>
            <person name="Khamispour A."/>
            <person name="Dowlati Y."/>
            <person name="Jianping S."/>
            <person name="Rea T.H."/>
            <person name="Vera-Cabrera L."/>
            <person name="Stefani M.M."/>
            <person name="Banu S."/>
            <person name="Macdonald M."/>
            <person name="Sapkota B.R."/>
            <person name="Spencer J.S."/>
            <person name="Thomas J."/>
            <person name="Harshman K."/>
            <person name="Singh P."/>
            <person name="Busso P."/>
            <person name="Gattiker A."/>
            <person name="Rougemont J."/>
            <person name="Brennan P.J."/>
            <person name="Cole S.T."/>
        </authorList>
    </citation>
    <scope>NUCLEOTIDE SEQUENCE [LARGE SCALE GENOMIC DNA]</scope>
    <source>
        <strain>Br4923</strain>
    </source>
</reference>
<feature type="chain" id="PRO_1000123333" description="Probable endonuclease 4">
    <location>
        <begin position="1"/>
        <end position="252"/>
    </location>
</feature>
<feature type="binding site" evidence="1">
    <location>
        <position position="56"/>
    </location>
    <ligand>
        <name>Zn(2+)</name>
        <dbReference type="ChEBI" id="CHEBI:29105"/>
        <label>1</label>
    </ligand>
</feature>
<feature type="binding site" evidence="1">
    <location>
        <position position="96"/>
    </location>
    <ligand>
        <name>Zn(2+)</name>
        <dbReference type="ChEBI" id="CHEBI:29105"/>
        <label>1</label>
    </ligand>
</feature>
<feature type="binding site" evidence="1">
    <location>
        <position position="129"/>
    </location>
    <ligand>
        <name>Zn(2+)</name>
        <dbReference type="ChEBI" id="CHEBI:29105"/>
        <label>1</label>
    </ligand>
</feature>
<feature type="binding site" evidence="1">
    <location>
        <position position="129"/>
    </location>
    <ligand>
        <name>Zn(2+)</name>
        <dbReference type="ChEBI" id="CHEBI:29105"/>
        <label>2</label>
    </ligand>
</feature>
<feature type="binding site" evidence="1">
    <location>
        <position position="162"/>
    </location>
    <ligand>
        <name>Zn(2+)</name>
        <dbReference type="ChEBI" id="CHEBI:29105"/>
        <label>2</label>
    </ligand>
</feature>
<feature type="binding site" evidence="1">
    <location>
        <position position="165"/>
    </location>
    <ligand>
        <name>Zn(2+)</name>
        <dbReference type="ChEBI" id="CHEBI:29105"/>
        <label>3</label>
    </ligand>
</feature>
<feature type="binding site" evidence="1">
    <location>
        <position position="191"/>
    </location>
    <ligand>
        <name>Zn(2+)</name>
        <dbReference type="ChEBI" id="CHEBI:29105"/>
        <label>2</label>
    </ligand>
</feature>
<feature type="binding site" evidence="1">
    <location>
        <position position="204"/>
    </location>
    <ligand>
        <name>Zn(2+)</name>
        <dbReference type="ChEBI" id="CHEBI:29105"/>
        <label>3</label>
    </ligand>
</feature>
<feature type="binding site" evidence="1">
    <location>
        <position position="206"/>
    </location>
    <ligand>
        <name>Zn(2+)</name>
        <dbReference type="ChEBI" id="CHEBI:29105"/>
        <label>3</label>
    </ligand>
</feature>
<feature type="binding site" evidence="1">
    <location>
        <position position="233"/>
    </location>
    <ligand>
        <name>Zn(2+)</name>
        <dbReference type="ChEBI" id="CHEBI:29105"/>
        <label>2</label>
    </ligand>
</feature>
<comment type="function">
    <text evidence="1">Endonuclease IV plays a role in DNA repair. It cleaves phosphodiester bonds at apurinic or apyrimidinic (AP) sites, generating a 3'-hydroxyl group and a 5'-terminal sugar phosphate.</text>
</comment>
<comment type="catalytic activity">
    <reaction evidence="1">
        <text>Endonucleolytic cleavage to 5'-phosphooligonucleotide end-products.</text>
        <dbReference type="EC" id="3.1.21.2"/>
    </reaction>
</comment>
<comment type="cofactor">
    <cofactor evidence="1">
        <name>Zn(2+)</name>
        <dbReference type="ChEBI" id="CHEBI:29105"/>
    </cofactor>
    <text evidence="1">Binds 3 Zn(2+) ions.</text>
</comment>
<comment type="similarity">
    <text evidence="1">Belongs to the AP endonuclease 2 family.</text>
</comment>
<evidence type="ECO:0000255" key="1">
    <source>
        <dbReference type="HAMAP-Rule" id="MF_00152"/>
    </source>
</evidence>
<protein>
    <recommendedName>
        <fullName evidence="1">Probable endonuclease 4</fullName>
        <ecNumber evidence="1">3.1.21.2</ecNumber>
    </recommendedName>
    <alternativeName>
        <fullName evidence="1">Endodeoxyribonuclease IV</fullName>
    </alternativeName>
    <alternativeName>
        <fullName evidence="1">Endonuclease IV</fullName>
    </alternativeName>
</protein>
<accession>B8ZSC5</accession>
<keyword id="KW-0227">DNA damage</keyword>
<keyword id="KW-0234">DNA repair</keyword>
<keyword id="KW-0255">Endonuclease</keyword>
<keyword id="KW-0378">Hydrolase</keyword>
<keyword id="KW-0479">Metal-binding</keyword>
<keyword id="KW-0540">Nuclease</keyword>
<keyword id="KW-0862">Zinc</keyword>
<dbReference type="EC" id="3.1.21.2" evidence="1"/>
<dbReference type="EMBL" id="FM211192">
    <property type="protein sequence ID" value="CAR71985.1"/>
    <property type="molecule type" value="Genomic_DNA"/>
</dbReference>
<dbReference type="SMR" id="B8ZSC5"/>
<dbReference type="KEGG" id="mlb:MLBr01889"/>
<dbReference type="HOGENOM" id="CLU_025885_0_2_11"/>
<dbReference type="Proteomes" id="UP000006900">
    <property type="component" value="Chromosome"/>
</dbReference>
<dbReference type="GO" id="GO:0008833">
    <property type="term" value="F:deoxyribonuclease IV (phage-T4-induced) activity"/>
    <property type="evidence" value="ECO:0007669"/>
    <property type="project" value="UniProtKB-UniRule"/>
</dbReference>
<dbReference type="GO" id="GO:0003677">
    <property type="term" value="F:DNA binding"/>
    <property type="evidence" value="ECO:0007669"/>
    <property type="project" value="InterPro"/>
</dbReference>
<dbReference type="GO" id="GO:0003906">
    <property type="term" value="F:DNA-(apurinic or apyrimidinic site) endonuclease activity"/>
    <property type="evidence" value="ECO:0007669"/>
    <property type="project" value="TreeGrafter"/>
</dbReference>
<dbReference type="GO" id="GO:0008081">
    <property type="term" value="F:phosphoric diester hydrolase activity"/>
    <property type="evidence" value="ECO:0007669"/>
    <property type="project" value="TreeGrafter"/>
</dbReference>
<dbReference type="GO" id="GO:0008270">
    <property type="term" value="F:zinc ion binding"/>
    <property type="evidence" value="ECO:0007669"/>
    <property type="project" value="UniProtKB-UniRule"/>
</dbReference>
<dbReference type="GO" id="GO:0006284">
    <property type="term" value="P:base-excision repair"/>
    <property type="evidence" value="ECO:0007669"/>
    <property type="project" value="TreeGrafter"/>
</dbReference>
<dbReference type="CDD" id="cd00019">
    <property type="entry name" value="AP2Ec"/>
    <property type="match status" value="1"/>
</dbReference>
<dbReference type="Gene3D" id="3.20.20.150">
    <property type="entry name" value="Divalent-metal-dependent TIM barrel enzymes"/>
    <property type="match status" value="1"/>
</dbReference>
<dbReference type="HAMAP" id="MF_00152">
    <property type="entry name" value="Nfo"/>
    <property type="match status" value="1"/>
</dbReference>
<dbReference type="InterPro" id="IPR001719">
    <property type="entry name" value="AP_endonuc_2"/>
</dbReference>
<dbReference type="InterPro" id="IPR018246">
    <property type="entry name" value="AP_endonuc_F2_Zn_BS"/>
</dbReference>
<dbReference type="InterPro" id="IPR036237">
    <property type="entry name" value="Xyl_isomerase-like_sf"/>
</dbReference>
<dbReference type="InterPro" id="IPR013022">
    <property type="entry name" value="Xyl_isomerase-like_TIM-brl"/>
</dbReference>
<dbReference type="NCBIfam" id="TIGR00587">
    <property type="entry name" value="nfo"/>
    <property type="match status" value="1"/>
</dbReference>
<dbReference type="NCBIfam" id="NF002198">
    <property type="entry name" value="PRK01060.1-3"/>
    <property type="match status" value="1"/>
</dbReference>
<dbReference type="PANTHER" id="PTHR21445:SF0">
    <property type="entry name" value="APURINIC-APYRIMIDINIC ENDONUCLEASE"/>
    <property type="match status" value="1"/>
</dbReference>
<dbReference type="PANTHER" id="PTHR21445">
    <property type="entry name" value="ENDONUCLEASE IV ENDODEOXYRIBONUCLEASE IV"/>
    <property type="match status" value="1"/>
</dbReference>
<dbReference type="Pfam" id="PF01261">
    <property type="entry name" value="AP_endonuc_2"/>
    <property type="match status" value="1"/>
</dbReference>
<dbReference type="SMART" id="SM00518">
    <property type="entry name" value="AP2Ec"/>
    <property type="match status" value="1"/>
</dbReference>
<dbReference type="SUPFAM" id="SSF51658">
    <property type="entry name" value="Xylose isomerase-like"/>
    <property type="match status" value="1"/>
</dbReference>
<dbReference type="PROSITE" id="PS00729">
    <property type="entry name" value="AP_NUCLEASE_F2_1"/>
    <property type="match status" value="1"/>
</dbReference>
<dbReference type="PROSITE" id="PS00730">
    <property type="entry name" value="AP_NUCLEASE_F2_2"/>
    <property type="match status" value="1"/>
</dbReference>
<dbReference type="PROSITE" id="PS00731">
    <property type="entry name" value="AP_NUCLEASE_F2_3"/>
    <property type="match status" value="1"/>
</dbReference>
<dbReference type="PROSITE" id="PS51432">
    <property type="entry name" value="AP_NUCLEASE_F2_4"/>
    <property type="match status" value="1"/>
</dbReference>
<sequence>MLIGSHVSSTDPLAAAEVEGADVVQIFLGNPQSWKAPTLRSDADVLKATALPVYVHAPYLINVASANSRVRIPSRKILQQTCDAAADIGAAAVVVHGGYVADDNDLEDGFQRWRKALDQLQTDVPVYLENTAGGDHAMARRFDTIARLWDVIGETGIGFCLDTCHAWAAGEGLIHVVDRIKAITGRIDLVHCNDSKDEAGSGRDRHANLGSGQIDAELLVAAVKVAGAPVICETAEEGRKDDIAFLREKTSG</sequence>
<organism>
    <name type="scientific">Mycobacterium leprae (strain Br4923)</name>
    <dbReference type="NCBI Taxonomy" id="561304"/>
    <lineage>
        <taxon>Bacteria</taxon>
        <taxon>Bacillati</taxon>
        <taxon>Actinomycetota</taxon>
        <taxon>Actinomycetes</taxon>
        <taxon>Mycobacteriales</taxon>
        <taxon>Mycobacteriaceae</taxon>
        <taxon>Mycobacterium</taxon>
    </lineage>
</organism>
<proteinExistence type="inferred from homology"/>
<name>END4_MYCLB</name>